<comment type="function">
    <text evidence="1">Catalyzes the transfer of a ribosyl phosphate group from 5-phosphoribose 1-diphosphate to orotate, leading to the formation of orotidine monophosphate (OMP).</text>
</comment>
<comment type="catalytic activity">
    <reaction evidence="1">
        <text>orotidine 5'-phosphate + diphosphate = orotate + 5-phospho-alpha-D-ribose 1-diphosphate</text>
        <dbReference type="Rhea" id="RHEA:10380"/>
        <dbReference type="ChEBI" id="CHEBI:30839"/>
        <dbReference type="ChEBI" id="CHEBI:33019"/>
        <dbReference type="ChEBI" id="CHEBI:57538"/>
        <dbReference type="ChEBI" id="CHEBI:58017"/>
        <dbReference type="EC" id="2.4.2.10"/>
    </reaction>
</comment>
<comment type="cofactor">
    <cofactor evidence="1">
        <name>Mg(2+)</name>
        <dbReference type="ChEBI" id="CHEBI:18420"/>
    </cofactor>
</comment>
<comment type="pathway">
    <text evidence="1">Pyrimidine metabolism; UMP biosynthesis via de novo pathway; UMP from orotate: step 1/2.</text>
</comment>
<comment type="subunit">
    <text evidence="1">Homodimer.</text>
</comment>
<comment type="similarity">
    <text evidence="1">Belongs to the purine/pyrimidine phosphoribosyltransferase family. PyrE subfamily.</text>
</comment>
<organism>
    <name type="scientific">Roseobacter denitrificans (strain ATCC 33942 / OCh 114)</name>
    <name type="common">Erythrobacter sp. (strain OCh 114)</name>
    <name type="synonym">Roseobacter denitrificans</name>
    <dbReference type="NCBI Taxonomy" id="375451"/>
    <lineage>
        <taxon>Bacteria</taxon>
        <taxon>Pseudomonadati</taxon>
        <taxon>Pseudomonadota</taxon>
        <taxon>Alphaproteobacteria</taxon>
        <taxon>Rhodobacterales</taxon>
        <taxon>Roseobacteraceae</taxon>
        <taxon>Roseobacter</taxon>
    </lineage>
</organism>
<keyword id="KW-0328">Glycosyltransferase</keyword>
<keyword id="KW-0460">Magnesium</keyword>
<keyword id="KW-0665">Pyrimidine biosynthesis</keyword>
<keyword id="KW-1185">Reference proteome</keyword>
<keyword id="KW-0808">Transferase</keyword>
<name>PYRE_ROSDO</name>
<protein>
    <recommendedName>
        <fullName evidence="1">Orotate phosphoribosyltransferase</fullName>
        <shortName evidence="1">OPRT</shortName>
        <shortName evidence="1">OPRTase</shortName>
        <ecNumber evidence="1">2.4.2.10</ecNumber>
    </recommendedName>
</protein>
<gene>
    <name evidence="1" type="primary">pyrE</name>
    <name type="ordered locus">RD1_3236</name>
</gene>
<dbReference type="EC" id="2.4.2.10" evidence="1"/>
<dbReference type="EMBL" id="CP000362">
    <property type="protein sequence ID" value="ABG32738.1"/>
    <property type="molecule type" value="Genomic_DNA"/>
</dbReference>
<dbReference type="RefSeq" id="WP_011569354.1">
    <property type="nucleotide sequence ID" value="NC_008209.1"/>
</dbReference>
<dbReference type="SMR" id="Q163V5"/>
<dbReference type="STRING" id="375451.RD1_3236"/>
<dbReference type="KEGG" id="rde:RD1_3236"/>
<dbReference type="eggNOG" id="COG0461">
    <property type="taxonomic scope" value="Bacteria"/>
</dbReference>
<dbReference type="HOGENOM" id="CLU_074878_1_0_5"/>
<dbReference type="OrthoDB" id="9802134at2"/>
<dbReference type="UniPathway" id="UPA00070">
    <property type="reaction ID" value="UER00119"/>
</dbReference>
<dbReference type="Proteomes" id="UP000007029">
    <property type="component" value="Chromosome"/>
</dbReference>
<dbReference type="GO" id="GO:0000287">
    <property type="term" value="F:magnesium ion binding"/>
    <property type="evidence" value="ECO:0007669"/>
    <property type="project" value="UniProtKB-UniRule"/>
</dbReference>
<dbReference type="GO" id="GO:0004588">
    <property type="term" value="F:orotate phosphoribosyltransferase activity"/>
    <property type="evidence" value="ECO:0007669"/>
    <property type="project" value="UniProtKB-UniRule"/>
</dbReference>
<dbReference type="GO" id="GO:0044205">
    <property type="term" value="P:'de novo' UMP biosynthetic process"/>
    <property type="evidence" value="ECO:0007669"/>
    <property type="project" value="UniProtKB-UniRule"/>
</dbReference>
<dbReference type="GO" id="GO:0019856">
    <property type="term" value="P:pyrimidine nucleobase biosynthetic process"/>
    <property type="evidence" value="ECO:0007669"/>
    <property type="project" value="TreeGrafter"/>
</dbReference>
<dbReference type="CDD" id="cd06223">
    <property type="entry name" value="PRTases_typeI"/>
    <property type="match status" value="1"/>
</dbReference>
<dbReference type="Gene3D" id="3.40.50.2020">
    <property type="match status" value="1"/>
</dbReference>
<dbReference type="HAMAP" id="MF_01208">
    <property type="entry name" value="PyrE"/>
    <property type="match status" value="1"/>
</dbReference>
<dbReference type="InterPro" id="IPR023031">
    <property type="entry name" value="OPRT"/>
</dbReference>
<dbReference type="InterPro" id="IPR004467">
    <property type="entry name" value="Or_phspho_trans_dom"/>
</dbReference>
<dbReference type="InterPro" id="IPR000836">
    <property type="entry name" value="PRibTrfase_dom"/>
</dbReference>
<dbReference type="InterPro" id="IPR029057">
    <property type="entry name" value="PRTase-like"/>
</dbReference>
<dbReference type="NCBIfam" id="NF001729">
    <property type="entry name" value="PRK00455.1-3"/>
    <property type="match status" value="1"/>
</dbReference>
<dbReference type="NCBIfam" id="TIGR00336">
    <property type="entry name" value="pyrE"/>
    <property type="match status" value="1"/>
</dbReference>
<dbReference type="PANTHER" id="PTHR19278">
    <property type="entry name" value="OROTATE PHOSPHORIBOSYLTRANSFERASE"/>
    <property type="match status" value="1"/>
</dbReference>
<dbReference type="PANTHER" id="PTHR19278:SF9">
    <property type="entry name" value="URIDINE 5'-MONOPHOSPHATE SYNTHASE"/>
    <property type="match status" value="1"/>
</dbReference>
<dbReference type="Pfam" id="PF00156">
    <property type="entry name" value="Pribosyltran"/>
    <property type="match status" value="1"/>
</dbReference>
<dbReference type="SUPFAM" id="SSF53271">
    <property type="entry name" value="PRTase-like"/>
    <property type="match status" value="1"/>
</dbReference>
<reference key="1">
    <citation type="journal article" date="2007" name="J. Bacteriol.">
        <title>The complete genome sequence of Roseobacter denitrificans reveals a mixotrophic rather than photosynthetic metabolism.</title>
        <authorList>
            <person name="Swingley W.D."/>
            <person name="Sadekar S."/>
            <person name="Mastrian S.D."/>
            <person name="Matthies H.J."/>
            <person name="Hao J."/>
            <person name="Ramos H."/>
            <person name="Acharya C.R."/>
            <person name="Conrad A.L."/>
            <person name="Taylor H.L."/>
            <person name="Dejesa L.C."/>
            <person name="Shah M.K."/>
            <person name="O'Huallachain M.E."/>
            <person name="Lince M.T."/>
            <person name="Blankenship R.E."/>
            <person name="Beatty J.T."/>
            <person name="Touchman J.W."/>
        </authorList>
    </citation>
    <scope>NUCLEOTIDE SEQUENCE [LARGE SCALE GENOMIC DNA]</scope>
    <source>
        <strain>ATCC 33942 / OCh 114</strain>
    </source>
</reference>
<accession>Q163V5</accession>
<evidence type="ECO:0000255" key="1">
    <source>
        <dbReference type="HAMAP-Rule" id="MF_01208"/>
    </source>
</evidence>
<sequence>MIPSAYPDAKEMARLTARMLLEIHAVHFNAKDPFTLSSGLPSPTYIDCRKLISFPRIRATLMDFLTVTVMRDVGFEAFDNIAGGETAGIPFAALVAERMALPMTYVRKKPKGYGRNARIEGAMGEGERVLLVEDLTTDGGSKLSFVDAIRETGATCGHTAVIFYYDIFPETTKTLGDHGVALHSLCTWWDVLAEAKQQGVFDEATLSEVEKFLHNPRKWQEANKK</sequence>
<feature type="chain" id="PRO_1000066289" description="Orotate phosphoribosyltransferase">
    <location>
        <begin position="1"/>
        <end position="225"/>
    </location>
</feature>
<feature type="binding site" evidence="1">
    <location>
        <position position="107"/>
    </location>
    <ligand>
        <name>5-phospho-alpha-D-ribose 1-diphosphate</name>
        <dbReference type="ChEBI" id="CHEBI:58017"/>
        <note>ligand shared between dimeric partners</note>
    </ligand>
</feature>
<feature type="binding site" description="in other chain" evidence="1">
    <location>
        <position position="108"/>
    </location>
    <ligand>
        <name>5-phospho-alpha-D-ribose 1-diphosphate</name>
        <dbReference type="ChEBI" id="CHEBI:58017"/>
        <note>ligand shared between dimeric partners</note>
    </ligand>
</feature>
<feature type="binding site" evidence="1">
    <location>
        <position position="111"/>
    </location>
    <ligand>
        <name>5-phospho-alpha-D-ribose 1-diphosphate</name>
        <dbReference type="ChEBI" id="CHEBI:58017"/>
        <note>ligand shared between dimeric partners</note>
    </ligand>
</feature>
<feature type="binding site" description="in other chain" evidence="1">
    <location>
        <begin position="133"/>
        <end position="141"/>
    </location>
    <ligand>
        <name>5-phospho-alpha-D-ribose 1-diphosphate</name>
        <dbReference type="ChEBI" id="CHEBI:58017"/>
        <note>ligand shared between dimeric partners</note>
    </ligand>
</feature>
<feature type="binding site" evidence="1">
    <location>
        <position position="137"/>
    </location>
    <ligand>
        <name>orotate</name>
        <dbReference type="ChEBI" id="CHEBI:30839"/>
    </ligand>
</feature>
<proteinExistence type="inferred from homology"/>